<dbReference type="EC" id="2.7.7.6" evidence="1"/>
<dbReference type="EMBL" id="AE009439">
    <property type="protein sequence ID" value="AAM01275.1"/>
    <property type="molecule type" value="Genomic_DNA"/>
</dbReference>
<dbReference type="RefSeq" id="WP_011018430.1">
    <property type="nucleotide sequence ID" value="NC_003551.1"/>
</dbReference>
<dbReference type="SMR" id="Q8TZ81"/>
<dbReference type="FunCoup" id="Q8TZ81">
    <property type="interactions" value="11"/>
</dbReference>
<dbReference type="STRING" id="190192.MK0058"/>
<dbReference type="PaxDb" id="190192-MK0058"/>
<dbReference type="EnsemblBacteria" id="AAM01275">
    <property type="protein sequence ID" value="AAM01275"/>
    <property type="gene ID" value="MK0058"/>
</dbReference>
<dbReference type="GeneID" id="1477361"/>
<dbReference type="KEGG" id="mka:MK0058"/>
<dbReference type="HOGENOM" id="CLU_2140209_0_0_2"/>
<dbReference type="InParanoid" id="Q8TZ81"/>
<dbReference type="OrthoDB" id="24205at2157"/>
<dbReference type="Proteomes" id="UP000001826">
    <property type="component" value="Chromosome"/>
</dbReference>
<dbReference type="GO" id="GO:0005737">
    <property type="term" value="C:cytoplasm"/>
    <property type="evidence" value="ECO:0007669"/>
    <property type="project" value="UniProtKB-SubCell"/>
</dbReference>
<dbReference type="GO" id="GO:0000428">
    <property type="term" value="C:DNA-directed RNA polymerase complex"/>
    <property type="evidence" value="ECO:0007669"/>
    <property type="project" value="UniProtKB-KW"/>
</dbReference>
<dbReference type="GO" id="GO:0003677">
    <property type="term" value="F:DNA binding"/>
    <property type="evidence" value="ECO:0007669"/>
    <property type="project" value="InterPro"/>
</dbReference>
<dbReference type="GO" id="GO:0003899">
    <property type="term" value="F:DNA-directed RNA polymerase activity"/>
    <property type="evidence" value="ECO:0007669"/>
    <property type="project" value="UniProtKB-UniRule"/>
</dbReference>
<dbReference type="GO" id="GO:0046983">
    <property type="term" value="F:protein dimerization activity"/>
    <property type="evidence" value="ECO:0007669"/>
    <property type="project" value="InterPro"/>
</dbReference>
<dbReference type="GO" id="GO:0006351">
    <property type="term" value="P:DNA-templated transcription"/>
    <property type="evidence" value="ECO:0007669"/>
    <property type="project" value="UniProtKB-UniRule"/>
</dbReference>
<dbReference type="CDD" id="cd06927">
    <property type="entry name" value="RNAP_L"/>
    <property type="match status" value="1"/>
</dbReference>
<dbReference type="Gene3D" id="3.30.1360.10">
    <property type="entry name" value="RNA polymerase, RBP11-like subunit"/>
    <property type="match status" value="1"/>
</dbReference>
<dbReference type="HAMAP" id="MF_00261">
    <property type="entry name" value="RNApol_arch_Rpo11"/>
    <property type="match status" value="1"/>
</dbReference>
<dbReference type="InterPro" id="IPR036603">
    <property type="entry name" value="RBP11-like"/>
</dbReference>
<dbReference type="InterPro" id="IPR009025">
    <property type="entry name" value="RBP11-like_dimer"/>
</dbReference>
<dbReference type="InterPro" id="IPR008193">
    <property type="entry name" value="RNA_pol_Rpb11_13-16kDa_CS"/>
</dbReference>
<dbReference type="InterPro" id="IPR022905">
    <property type="entry name" value="Rpo11-like"/>
</dbReference>
<dbReference type="Pfam" id="PF13656">
    <property type="entry name" value="RNA_pol_L_2"/>
    <property type="match status" value="1"/>
</dbReference>
<dbReference type="SUPFAM" id="SSF55257">
    <property type="entry name" value="RBP11-like subunits of RNA polymerase"/>
    <property type="match status" value="1"/>
</dbReference>
<dbReference type="PROSITE" id="PS01154">
    <property type="entry name" value="RNA_POL_L_13KD"/>
    <property type="match status" value="1"/>
</dbReference>
<gene>
    <name evidence="1" type="primary">rpo11</name>
    <name evidence="1" type="synonym">rpoL</name>
    <name type="ordered locus">MK0058</name>
</gene>
<keyword id="KW-0963">Cytoplasm</keyword>
<keyword id="KW-0240">DNA-directed RNA polymerase</keyword>
<keyword id="KW-0548">Nucleotidyltransferase</keyword>
<keyword id="KW-1185">Reference proteome</keyword>
<keyword id="KW-0804">Transcription</keyword>
<keyword id="KW-0808">Transferase</keyword>
<evidence type="ECO:0000255" key="1">
    <source>
        <dbReference type="HAMAP-Rule" id="MF_00261"/>
    </source>
</evidence>
<protein>
    <recommendedName>
        <fullName evidence="1">DNA-directed RNA polymerase subunit Rpo11</fullName>
        <ecNumber evidence="1">2.7.7.6</ecNumber>
    </recommendedName>
    <alternativeName>
        <fullName evidence="1">DNA-directed RNA polymerase subunit L</fullName>
    </alternativeName>
</protein>
<name>RPO11_METKA</name>
<accession>Q8TZ81</accession>
<organism>
    <name type="scientific">Methanopyrus kandleri (strain AV19 / DSM 6324 / JCM 9639 / NBRC 100938)</name>
    <dbReference type="NCBI Taxonomy" id="190192"/>
    <lineage>
        <taxon>Archaea</taxon>
        <taxon>Methanobacteriati</taxon>
        <taxon>Methanobacteriota</taxon>
        <taxon>Methanomada group</taxon>
        <taxon>Methanopyri</taxon>
        <taxon>Methanopyrales</taxon>
        <taxon>Methanopyraceae</taxon>
        <taxon>Methanopyrus</taxon>
    </lineage>
</organism>
<reference key="1">
    <citation type="journal article" date="2002" name="Proc. Natl. Acad. Sci. U.S.A.">
        <title>The complete genome of hyperthermophile Methanopyrus kandleri AV19 and monophyly of archaeal methanogens.</title>
        <authorList>
            <person name="Slesarev A.I."/>
            <person name="Mezhevaya K.V."/>
            <person name="Makarova K.S."/>
            <person name="Polushin N.N."/>
            <person name="Shcherbinina O.V."/>
            <person name="Shakhova V.V."/>
            <person name="Belova G.I."/>
            <person name="Aravind L."/>
            <person name="Natale D.A."/>
            <person name="Rogozin I.B."/>
            <person name="Tatusov R.L."/>
            <person name="Wolf Y.I."/>
            <person name="Stetter K.O."/>
            <person name="Malykh A.G."/>
            <person name="Koonin E.V."/>
            <person name="Kozyavkin S.A."/>
        </authorList>
    </citation>
    <scope>NUCLEOTIDE SEQUENCE [LARGE SCALE GENOMIC DNA]</scope>
    <source>
        <strain>AV19 / DSM 6324 / JCM 9639 / NBRC 100938</strain>
    </source>
</reference>
<comment type="function">
    <text evidence="1">DNA-dependent RNA polymerase (RNAP) catalyzes the transcription of DNA into RNA using the four ribonucleoside triphosphates as substrates.</text>
</comment>
<comment type="catalytic activity">
    <reaction evidence="1">
        <text>RNA(n) + a ribonucleoside 5'-triphosphate = RNA(n+1) + diphosphate</text>
        <dbReference type="Rhea" id="RHEA:21248"/>
        <dbReference type="Rhea" id="RHEA-COMP:14527"/>
        <dbReference type="Rhea" id="RHEA-COMP:17342"/>
        <dbReference type="ChEBI" id="CHEBI:33019"/>
        <dbReference type="ChEBI" id="CHEBI:61557"/>
        <dbReference type="ChEBI" id="CHEBI:140395"/>
        <dbReference type="EC" id="2.7.7.6"/>
    </reaction>
</comment>
<comment type="subunit">
    <text evidence="1">Part of the RNA polymerase complex.</text>
</comment>
<comment type="subcellular location">
    <subcellularLocation>
        <location evidence="1">Cytoplasm</location>
    </subcellularLocation>
</comment>
<comment type="similarity">
    <text evidence="1">Belongs to the archaeal Rpo11/eukaryotic RPB11/RPC19 RNA polymerase subunit family.</text>
</comment>
<sequence>MKLPEVEVVVKKYDKDEVLLELPGEDHTLCNLLRWALNRQDGIIATYRIEHPILGKEHKVDEERYVPPKMRIRAVDEDADAREALERAIEELLELVEEAKEEFSGALEEKES</sequence>
<proteinExistence type="inferred from homology"/>
<feature type="chain" id="PRO_0000149327" description="DNA-directed RNA polymerase subunit Rpo11">
    <location>
        <begin position="1"/>
        <end position="112"/>
    </location>
</feature>